<name>NDHI_PELHO</name>
<dbReference type="EC" id="7.1.1.-" evidence="1"/>
<dbReference type="EMBL" id="DQ897681">
    <property type="protein sequence ID" value="ABI17322.1"/>
    <property type="molecule type" value="Genomic_DNA"/>
</dbReference>
<dbReference type="RefSeq" id="YP_784131.1">
    <property type="nucleotide sequence ID" value="NC_008454.1"/>
</dbReference>
<dbReference type="SMR" id="Q06FQ0"/>
<dbReference type="GeneID" id="4362884"/>
<dbReference type="GO" id="GO:0009535">
    <property type="term" value="C:chloroplast thylakoid membrane"/>
    <property type="evidence" value="ECO:0007669"/>
    <property type="project" value="UniProtKB-SubCell"/>
</dbReference>
<dbReference type="GO" id="GO:0051539">
    <property type="term" value="F:4 iron, 4 sulfur cluster binding"/>
    <property type="evidence" value="ECO:0007669"/>
    <property type="project" value="UniProtKB-KW"/>
</dbReference>
<dbReference type="GO" id="GO:0005506">
    <property type="term" value="F:iron ion binding"/>
    <property type="evidence" value="ECO:0007669"/>
    <property type="project" value="UniProtKB-UniRule"/>
</dbReference>
<dbReference type="GO" id="GO:0008137">
    <property type="term" value="F:NADH dehydrogenase (ubiquinone) activity"/>
    <property type="evidence" value="ECO:0007669"/>
    <property type="project" value="InterPro"/>
</dbReference>
<dbReference type="GO" id="GO:0048038">
    <property type="term" value="F:quinone binding"/>
    <property type="evidence" value="ECO:0007669"/>
    <property type="project" value="UniProtKB-KW"/>
</dbReference>
<dbReference type="GO" id="GO:0019684">
    <property type="term" value="P:photosynthesis, light reaction"/>
    <property type="evidence" value="ECO:0007669"/>
    <property type="project" value="UniProtKB-UniRule"/>
</dbReference>
<dbReference type="FunFam" id="3.30.70.3270:FF:000006">
    <property type="entry name" value="NAD(P)H-quinone oxidoreductase subunit I, chloroplastic"/>
    <property type="match status" value="1"/>
</dbReference>
<dbReference type="Gene3D" id="3.30.70.3270">
    <property type="match status" value="1"/>
</dbReference>
<dbReference type="HAMAP" id="MF_01351">
    <property type="entry name" value="NDH1_NuoI"/>
    <property type="match status" value="1"/>
</dbReference>
<dbReference type="InterPro" id="IPR017896">
    <property type="entry name" value="4Fe4S_Fe-S-bd"/>
</dbReference>
<dbReference type="InterPro" id="IPR017900">
    <property type="entry name" value="4Fe4S_Fe_S_CS"/>
</dbReference>
<dbReference type="InterPro" id="IPR010226">
    <property type="entry name" value="NADH_quinone_OxRdtase_chainI"/>
</dbReference>
<dbReference type="InterPro" id="IPR004497">
    <property type="entry name" value="NDHI"/>
</dbReference>
<dbReference type="NCBIfam" id="TIGR00403">
    <property type="entry name" value="ndhI"/>
    <property type="match status" value="1"/>
</dbReference>
<dbReference type="NCBIfam" id="TIGR01971">
    <property type="entry name" value="NuoI"/>
    <property type="match status" value="1"/>
</dbReference>
<dbReference type="NCBIfam" id="NF004537">
    <property type="entry name" value="PRK05888.1-3"/>
    <property type="match status" value="1"/>
</dbReference>
<dbReference type="PANTHER" id="PTHR47275">
    <property type="entry name" value="NAD(P)H-QUINONE OXIDOREDUCTASE SUBUNIT I, CHLOROPLASTIC"/>
    <property type="match status" value="1"/>
</dbReference>
<dbReference type="PANTHER" id="PTHR47275:SF1">
    <property type="entry name" value="NAD(P)H-QUINONE OXIDOREDUCTASE SUBUNIT I, CHLOROPLASTIC"/>
    <property type="match status" value="1"/>
</dbReference>
<dbReference type="Pfam" id="PF12838">
    <property type="entry name" value="Fer4_7"/>
    <property type="match status" value="1"/>
</dbReference>
<dbReference type="SUPFAM" id="SSF54862">
    <property type="entry name" value="4Fe-4S ferredoxins"/>
    <property type="match status" value="1"/>
</dbReference>
<dbReference type="PROSITE" id="PS00198">
    <property type="entry name" value="4FE4S_FER_1"/>
    <property type="match status" value="2"/>
</dbReference>
<dbReference type="PROSITE" id="PS51379">
    <property type="entry name" value="4FE4S_FER_2"/>
    <property type="match status" value="2"/>
</dbReference>
<proteinExistence type="inferred from homology"/>
<gene>
    <name evidence="1" type="primary">ndhI</name>
</gene>
<comment type="function">
    <text evidence="1">NDH shuttles electrons from NAD(P)H:plastoquinone, via FMN and iron-sulfur (Fe-S) centers, to quinones in the photosynthetic chain and possibly in a chloroplast respiratory chain. The immediate electron acceptor for the enzyme in this species is believed to be plastoquinone. Couples the redox reaction to proton translocation, and thus conserves the redox energy in a proton gradient.</text>
</comment>
<comment type="catalytic activity">
    <reaction evidence="1">
        <text>a plastoquinone + NADH + (n+1) H(+)(in) = a plastoquinol + NAD(+) + n H(+)(out)</text>
        <dbReference type="Rhea" id="RHEA:42608"/>
        <dbReference type="Rhea" id="RHEA-COMP:9561"/>
        <dbReference type="Rhea" id="RHEA-COMP:9562"/>
        <dbReference type="ChEBI" id="CHEBI:15378"/>
        <dbReference type="ChEBI" id="CHEBI:17757"/>
        <dbReference type="ChEBI" id="CHEBI:57540"/>
        <dbReference type="ChEBI" id="CHEBI:57945"/>
        <dbReference type="ChEBI" id="CHEBI:62192"/>
    </reaction>
</comment>
<comment type="catalytic activity">
    <reaction evidence="1">
        <text>a plastoquinone + NADPH + (n+1) H(+)(in) = a plastoquinol + NADP(+) + n H(+)(out)</text>
        <dbReference type="Rhea" id="RHEA:42612"/>
        <dbReference type="Rhea" id="RHEA-COMP:9561"/>
        <dbReference type="Rhea" id="RHEA-COMP:9562"/>
        <dbReference type="ChEBI" id="CHEBI:15378"/>
        <dbReference type="ChEBI" id="CHEBI:17757"/>
        <dbReference type="ChEBI" id="CHEBI:57783"/>
        <dbReference type="ChEBI" id="CHEBI:58349"/>
        <dbReference type="ChEBI" id="CHEBI:62192"/>
    </reaction>
</comment>
<comment type="cofactor">
    <cofactor evidence="1">
        <name>[4Fe-4S] cluster</name>
        <dbReference type="ChEBI" id="CHEBI:49883"/>
    </cofactor>
    <text evidence="1">Binds 2 [4Fe-4S] clusters per subunit.</text>
</comment>
<comment type="subunit">
    <text evidence="1">NDH is composed of at least 16 different subunits, 5 of which are encoded in the nucleus.</text>
</comment>
<comment type="subcellular location">
    <subcellularLocation>
        <location evidence="1">Plastid</location>
        <location evidence="1">Chloroplast thylakoid membrane</location>
        <topology evidence="1">Peripheral membrane protein</topology>
    </subcellularLocation>
</comment>
<comment type="similarity">
    <text evidence="1">Belongs to the complex I 23 kDa subunit family.</text>
</comment>
<geneLocation type="chloroplast"/>
<evidence type="ECO:0000255" key="1">
    <source>
        <dbReference type="HAMAP-Rule" id="MF_01351"/>
    </source>
</evidence>
<feature type="chain" id="PRO_0000275478" description="NAD(P)H-quinone oxidoreductase subunit I, chloroplastic">
    <location>
        <begin position="1"/>
        <end position="167"/>
    </location>
</feature>
<feature type="domain" description="4Fe-4S ferredoxin-type 1" evidence="1">
    <location>
        <begin position="55"/>
        <end position="84"/>
    </location>
</feature>
<feature type="domain" description="4Fe-4S ferredoxin-type 2" evidence="1">
    <location>
        <begin position="95"/>
        <end position="124"/>
    </location>
</feature>
<feature type="binding site" evidence="1">
    <location>
        <position position="64"/>
    </location>
    <ligand>
        <name>[4Fe-4S] cluster</name>
        <dbReference type="ChEBI" id="CHEBI:49883"/>
        <label>1</label>
    </ligand>
</feature>
<feature type="binding site" evidence="1">
    <location>
        <position position="67"/>
    </location>
    <ligand>
        <name>[4Fe-4S] cluster</name>
        <dbReference type="ChEBI" id="CHEBI:49883"/>
        <label>1</label>
    </ligand>
</feature>
<feature type="binding site" evidence="1">
    <location>
        <position position="70"/>
    </location>
    <ligand>
        <name>[4Fe-4S] cluster</name>
        <dbReference type="ChEBI" id="CHEBI:49883"/>
        <label>1</label>
    </ligand>
</feature>
<feature type="binding site" evidence="1">
    <location>
        <position position="74"/>
    </location>
    <ligand>
        <name>[4Fe-4S] cluster</name>
        <dbReference type="ChEBI" id="CHEBI:49883"/>
        <label>2</label>
    </ligand>
</feature>
<feature type="binding site" evidence="1">
    <location>
        <position position="104"/>
    </location>
    <ligand>
        <name>[4Fe-4S] cluster</name>
        <dbReference type="ChEBI" id="CHEBI:49883"/>
        <label>2</label>
    </ligand>
</feature>
<feature type="binding site" evidence="1">
    <location>
        <position position="107"/>
    </location>
    <ligand>
        <name>[4Fe-4S] cluster</name>
        <dbReference type="ChEBI" id="CHEBI:49883"/>
        <label>2</label>
    </ligand>
</feature>
<feature type="binding site" evidence="1">
    <location>
        <position position="110"/>
    </location>
    <ligand>
        <name>[4Fe-4S] cluster</name>
        <dbReference type="ChEBI" id="CHEBI:49883"/>
        <label>2</label>
    </ligand>
</feature>
<feature type="binding site" evidence="1">
    <location>
        <position position="114"/>
    </location>
    <ligand>
        <name>[4Fe-4S] cluster</name>
        <dbReference type="ChEBI" id="CHEBI:49883"/>
        <label>1</label>
    </ligand>
</feature>
<keyword id="KW-0004">4Fe-4S</keyword>
<keyword id="KW-0150">Chloroplast</keyword>
<keyword id="KW-0408">Iron</keyword>
<keyword id="KW-0411">Iron-sulfur</keyword>
<keyword id="KW-0472">Membrane</keyword>
<keyword id="KW-0479">Metal-binding</keyword>
<keyword id="KW-0520">NAD</keyword>
<keyword id="KW-0521">NADP</keyword>
<keyword id="KW-0934">Plastid</keyword>
<keyword id="KW-0618">Plastoquinone</keyword>
<keyword id="KW-0874">Quinone</keyword>
<keyword id="KW-0677">Repeat</keyword>
<keyword id="KW-0793">Thylakoid</keyword>
<keyword id="KW-1278">Translocase</keyword>
<organism>
    <name type="scientific">Pelargonium hortorum</name>
    <name type="common">Common geranium</name>
    <name type="synonym">Pelargonium inquinans x Pelargonium zonale</name>
    <dbReference type="NCBI Taxonomy" id="4031"/>
    <lineage>
        <taxon>Eukaryota</taxon>
        <taxon>Viridiplantae</taxon>
        <taxon>Streptophyta</taxon>
        <taxon>Embryophyta</taxon>
        <taxon>Tracheophyta</taxon>
        <taxon>Spermatophyta</taxon>
        <taxon>Magnoliopsida</taxon>
        <taxon>eudicotyledons</taxon>
        <taxon>Gunneridae</taxon>
        <taxon>Pentapetalae</taxon>
        <taxon>rosids</taxon>
        <taxon>malvids</taxon>
        <taxon>Geraniales</taxon>
        <taxon>Geraniaceae</taxon>
        <taxon>Pelargonium</taxon>
    </lineage>
</organism>
<accession>Q06FQ0</accession>
<reference key="1">
    <citation type="journal article" date="2006" name="Mol. Biol. Evol.">
        <title>The complete chloroplast genome sequence of Pelargonium x hortorum: organization and evolution of the largest and most highly rearranged chloroplast genome of land plants.</title>
        <authorList>
            <person name="Chumley T.W."/>
            <person name="Palmer J.D."/>
            <person name="Mower J.P."/>
            <person name="Fourcade H.M."/>
            <person name="Calie P.J."/>
            <person name="Boore J.L."/>
            <person name="Jansen R.K."/>
        </authorList>
    </citation>
    <scope>NUCLEOTIDE SEQUENCE [LARGE SCALE GENOMIC DNA]</scope>
    <source>
        <strain>cv. Ringo White</strain>
    </source>
</reference>
<sequence length="167" mass="19669">MFPMVTGFMNYGQQTVRAARYIGQSLIITLSHSNRFPVTIQYPYEKLMTSERFRGRIHFEFDKCIACEVCVRVCPIDLPVVDWKFERDIRKKRLLNYSIDFGICIFCGNCVEYCPTNCLSMTEEYELSTYDRHELNYNQTALGRLPMPVIDDYTIRTIFNLPKIKSK</sequence>
<protein>
    <recommendedName>
        <fullName evidence="1">NAD(P)H-quinone oxidoreductase subunit I, chloroplastic</fullName>
        <ecNumber evidence="1">7.1.1.-</ecNumber>
    </recommendedName>
    <alternativeName>
        <fullName evidence="1">NAD(P)H dehydrogenase subunit I</fullName>
        <shortName evidence="1">NDH subunit I</shortName>
    </alternativeName>
    <alternativeName>
        <fullName evidence="1">NADH-plastoquinone oxidoreductase subunit I</fullName>
    </alternativeName>
</protein>